<evidence type="ECO:0000255" key="1">
    <source>
        <dbReference type="PROSITE-ProRule" id="PRU00227"/>
    </source>
</evidence>
<evidence type="ECO:0000256" key="2">
    <source>
        <dbReference type="SAM" id="MobiDB-lite"/>
    </source>
</evidence>
<evidence type="ECO:0007829" key="3">
    <source>
        <dbReference type="PDB" id="1CLD"/>
    </source>
</evidence>
<evidence type="ECO:0007829" key="4">
    <source>
        <dbReference type="PDB" id="3E1K"/>
    </source>
</evidence>
<reference key="1">
    <citation type="journal article" date="1987" name="Mol. Cell. Biol.">
        <title>Characterization of a positive regulatory gene, LAC9, that controls induction of the lactose-galactose regulon of Kluyveromyces lactis: structural and functional relationships to GAL4 of Saccharomyces cerevisiae.</title>
        <authorList>
            <person name="Wray L.V. Jr."/>
            <person name="Witte M.M."/>
            <person name="Dickson R.C."/>
            <person name="Riley M.I."/>
        </authorList>
    </citation>
    <scope>NUCLEOTIDE SEQUENCE [GENOMIC DNA]</scope>
</reference>
<reference key="2">
    <citation type="journal article" date="1986" name="Nucleic Acids Res.">
        <title>Analysis of the Kluyveromyces lactis positive regulatory gene LAC9 reveals functional homology to, but sequence divergence from, the Saccharomyces cerevisiae GAL4 gene.</title>
        <authorList>
            <person name="Salmeron J.M."/>
            <person name="Johnston S.A."/>
        </authorList>
    </citation>
    <scope>NUCLEOTIDE SEQUENCE [GENOMIC DNA]</scope>
    <source>
        <strain>ATCC 8585 / CBS 2359 / DSM 70799 / NBRC 1267 / NRRL Y-1140 / WM37</strain>
    </source>
</reference>
<reference key="3">
    <citation type="journal article" date="2004" name="Nature">
        <title>Genome evolution in yeasts.</title>
        <authorList>
            <person name="Dujon B."/>
            <person name="Sherman D."/>
            <person name="Fischer G."/>
            <person name="Durrens P."/>
            <person name="Casaregola S."/>
            <person name="Lafontaine I."/>
            <person name="de Montigny J."/>
            <person name="Marck C."/>
            <person name="Neuveglise C."/>
            <person name="Talla E."/>
            <person name="Goffard N."/>
            <person name="Frangeul L."/>
            <person name="Aigle M."/>
            <person name="Anthouard V."/>
            <person name="Babour A."/>
            <person name="Barbe V."/>
            <person name="Barnay S."/>
            <person name="Blanchin S."/>
            <person name="Beckerich J.-M."/>
            <person name="Beyne E."/>
            <person name="Bleykasten C."/>
            <person name="Boisrame A."/>
            <person name="Boyer J."/>
            <person name="Cattolico L."/>
            <person name="Confanioleri F."/>
            <person name="de Daruvar A."/>
            <person name="Despons L."/>
            <person name="Fabre E."/>
            <person name="Fairhead C."/>
            <person name="Ferry-Dumazet H."/>
            <person name="Groppi A."/>
            <person name="Hantraye F."/>
            <person name="Hennequin C."/>
            <person name="Jauniaux N."/>
            <person name="Joyet P."/>
            <person name="Kachouri R."/>
            <person name="Kerrest A."/>
            <person name="Koszul R."/>
            <person name="Lemaire M."/>
            <person name="Lesur I."/>
            <person name="Ma L."/>
            <person name="Muller H."/>
            <person name="Nicaud J.-M."/>
            <person name="Nikolski M."/>
            <person name="Oztas S."/>
            <person name="Ozier-Kalogeropoulos O."/>
            <person name="Pellenz S."/>
            <person name="Potier S."/>
            <person name="Richard G.-F."/>
            <person name="Straub M.-L."/>
            <person name="Suleau A."/>
            <person name="Swennen D."/>
            <person name="Tekaia F."/>
            <person name="Wesolowski-Louvel M."/>
            <person name="Westhof E."/>
            <person name="Wirth B."/>
            <person name="Zeniou-Meyer M."/>
            <person name="Zivanovic Y."/>
            <person name="Bolotin-Fukuhara M."/>
            <person name="Thierry A."/>
            <person name="Bouchier C."/>
            <person name="Caudron B."/>
            <person name="Scarpelli C."/>
            <person name="Gaillardin C."/>
            <person name="Weissenbach J."/>
            <person name="Wincker P."/>
            <person name="Souciet J.-L."/>
        </authorList>
    </citation>
    <scope>NUCLEOTIDE SEQUENCE [LARGE SCALE GENOMIC DNA]</scope>
    <source>
        <strain>ATCC 8585 / CBS 2359 / DSM 70799 / NBRC 1267 / NRRL Y-1140 / WM37</strain>
    </source>
</reference>
<reference key="4">
    <citation type="journal article" date="1990" name="Nucleic Acids Res.">
        <title>A mutation in the Zn-finger of the GAL4 homolog LAC9 results in glucose repression of its target genes.</title>
        <authorList>
            <person name="Kuger P."/>
            <person name="Goedecke A."/>
            <person name="Breunig K.D."/>
        </authorList>
    </citation>
    <scope>MUTAGENESIS</scope>
</reference>
<reference key="5">
    <citation type="journal article" date="1995" name="Nat. Struct. Biol.">
        <title>Solution structure of the Kluyveromyces lactis LAC9 Cd2 Cys6 DNA-binding domain.</title>
        <authorList>
            <person name="Gardner K.H."/>
            <person name="Anderson S.F."/>
            <person name="Coleman J.E."/>
        </authorList>
    </citation>
    <scope>STRUCTURE BY NMR OF 85-144</scope>
</reference>
<comment type="function">
    <text>Positive regulatory protein, that controls induction of the lactose-galactose regulation of Kluyveromyces lactis.</text>
</comment>
<comment type="subcellular location">
    <subcellularLocation>
        <location>Nucleus</location>
    </subcellularLocation>
</comment>
<organism>
    <name type="scientific">Kluyveromyces lactis (strain ATCC 8585 / CBS 2359 / DSM 70799 / NBRC 1267 / NRRL Y-1140 / WM37)</name>
    <name type="common">Yeast</name>
    <name type="synonym">Candida sphaerica</name>
    <dbReference type="NCBI Taxonomy" id="284590"/>
    <lineage>
        <taxon>Eukaryota</taxon>
        <taxon>Fungi</taxon>
        <taxon>Dikarya</taxon>
        <taxon>Ascomycota</taxon>
        <taxon>Saccharomycotina</taxon>
        <taxon>Saccharomycetes</taxon>
        <taxon>Saccharomycetales</taxon>
        <taxon>Saccharomycetaceae</taxon>
        <taxon>Kluyveromyces</taxon>
    </lineage>
</organism>
<name>LAC9_KLULA</name>
<feature type="chain" id="PRO_0000114953" description="Lactose regulatory protein LAC9">
    <location>
        <begin position="1"/>
        <end position="865"/>
    </location>
</feature>
<feature type="DNA-binding region" description="Zn(2)-C6 fungal-type" evidence="1">
    <location>
        <begin position="95"/>
        <end position="122"/>
    </location>
</feature>
<feature type="region of interest" description="Disordered" evidence="2">
    <location>
        <begin position="1"/>
        <end position="87"/>
    </location>
</feature>
<feature type="region of interest" description="Disordered" evidence="2">
    <location>
        <begin position="818"/>
        <end position="840"/>
    </location>
</feature>
<feature type="compositionally biased region" description="Polar residues" evidence="2">
    <location>
        <begin position="1"/>
        <end position="15"/>
    </location>
</feature>
<feature type="compositionally biased region" description="Basic and acidic residues" evidence="2">
    <location>
        <begin position="22"/>
        <end position="34"/>
    </location>
</feature>
<feature type="compositionally biased region" description="Low complexity" evidence="2">
    <location>
        <begin position="67"/>
        <end position="85"/>
    </location>
</feature>
<feature type="binding site">
    <location>
        <position position="95"/>
    </location>
    <ligand>
        <name>Zn(2+)</name>
        <dbReference type="ChEBI" id="CHEBI:29105"/>
        <label>1</label>
    </ligand>
</feature>
<feature type="binding site">
    <location>
        <position position="95"/>
    </location>
    <ligand>
        <name>Zn(2+)</name>
        <dbReference type="ChEBI" id="CHEBI:29105"/>
        <label>2</label>
    </ligand>
</feature>
<feature type="binding site">
    <location>
        <position position="98"/>
    </location>
    <ligand>
        <name>Zn(2+)</name>
        <dbReference type="ChEBI" id="CHEBI:29105"/>
        <label>1</label>
    </ligand>
</feature>
<feature type="binding site">
    <location>
        <position position="105"/>
    </location>
    <ligand>
        <name>Zn(2+)</name>
        <dbReference type="ChEBI" id="CHEBI:29105"/>
        <label>1</label>
    </ligand>
</feature>
<feature type="binding site">
    <location>
        <position position="112"/>
    </location>
    <ligand>
        <name>Zn(2+)</name>
        <dbReference type="ChEBI" id="CHEBI:29105"/>
        <label>1</label>
    </ligand>
</feature>
<feature type="binding site">
    <location>
        <position position="112"/>
    </location>
    <ligand>
        <name>Zn(2+)</name>
        <dbReference type="ChEBI" id="CHEBI:29105"/>
        <label>2</label>
    </ligand>
</feature>
<feature type="binding site">
    <location>
        <position position="115"/>
    </location>
    <ligand>
        <name>Zn(2+)</name>
        <dbReference type="ChEBI" id="CHEBI:29105"/>
        <label>2</label>
    </ligand>
</feature>
<feature type="binding site">
    <location>
        <position position="122"/>
    </location>
    <ligand>
        <name>Zn(2+)</name>
        <dbReference type="ChEBI" id="CHEBI:29105"/>
        <label>2</label>
    </ligand>
</feature>
<feature type="helix" evidence="3">
    <location>
        <begin position="96"/>
        <end position="100"/>
    </location>
</feature>
<feature type="strand" evidence="3">
    <location>
        <begin position="109"/>
        <end position="111"/>
    </location>
</feature>
<feature type="helix" evidence="3">
    <location>
        <begin position="113"/>
        <end position="118"/>
    </location>
</feature>
<feature type="helix" evidence="4">
    <location>
        <begin position="853"/>
        <end position="859"/>
    </location>
</feature>
<accession>P08657</accession>
<sequence>MGSRASNSPSFSSKAETLLPSEYKKNAVKKETIRNGKKRKLPDTESSDPEFASRRLIANETGTDAVSNGNKNDSNANNNNNNNNKKSSEVMHQACDACRKKKWKCSKTVPTCTNCLKYNLDCVYSPQVVRTPLTRAHLTEMENRVAELEQFLKELFPVWDIDRLLQQKDTYRIRELLTMGSTNTVPGLASNNIDSSLEQPVAFGTAQPAQSLSTDPAVQSQAYPMQPVPMTELQSITNLRHTPSLLDEQQMNTISTATLRNMYSSGNNNNNLGNISGLSPVTEAFFRWQEGETSIDNSYFGKGSILFWLNQLLSSEKIAGVTSKVGNDINTNNNNINHQKLPLILNNNITHNVSDITTTSTSSNKRAMSPLSANDSVYLAKRETISAYIDAYFKHYHALYPLVSKEMFFAQYNDQIKPENVEIWHILLNAVLALGSWCSNSCSSHHTLYYQNALSYLSTAVLETGSTDLTIALILLTHYVQKMHKPNTAWSLIGLCSHMATSLGLHRDLPNSTIHDQQLRRVLWWTIYCTGCDLSLETGRPSLLPNLQAIDIPLPASSATIKEPSIYSSIIQESQWSQILQQKLSNNSYQQSAGECLSWFDSVQAFLDHWPTPSTEAELKALNETQLDWLPLVKFRPYWMFHCSLISLFSVFFEEDAPTDNNVIRCKELCLQLSSRNIFSVATFVRSYAFNSLSCWYATHYLVRSALVPLHFASRISPQHALWETVKAQLLSAHEAMGILSQESSLAAKFDGILTKNYSEILQREGINKSQLMPPPTPLLQSTSFSDLLSLWSANAEDAPRVSNSQMPQSITITDSLLQSSTTQMRPPTTSGWPDTNNFLNPSTQQLFNTTTMDDVYNYIFDNDE</sequence>
<protein>
    <recommendedName>
        <fullName>Lactose regulatory protein LAC9</fullName>
    </recommendedName>
</protein>
<gene>
    <name type="primary">LAC9</name>
    <name type="ordered locus">KLLA0D12672g</name>
</gene>
<dbReference type="EMBL" id="M15210">
    <property type="protein sequence ID" value="AAA35266.1"/>
    <property type="molecule type" value="Genomic_DNA"/>
</dbReference>
<dbReference type="EMBL" id="X06215">
    <property type="protein sequence ID" value="CAA29565.1"/>
    <property type="molecule type" value="Genomic_DNA"/>
</dbReference>
<dbReference type="EMBL" id="CR382124">
    <property type="protein sequence ID" value="CAH00723.1"/>
    <property type="molecule type" value="Genomic_DNA"/>
</dbReference>
<dbReference type="PIR" id="A93641">
    <property type="entry name" value="A25762"/>
</dbReference>
<dbReference type="PIR" id="S08482">
    <property type="entry name" value="S08482"/>
</dbReference>
<dbReference type="RefSeq" id="XP_453627.1">
    <property type="nucleotide sequence ID" value="XM_453627.1"/>
</dbReference>
<dbReference type="PDB" id="1CLD">
    <property type="method" value="NMR"/>
    <property type="chains" value="A=85-144"/>
</dbReference>
<dbReference type="PDB" id="3E1K">
    <property type="method" value="X-ray"/>
    <property type="resolution" value="3.00 A"/>
    <property type="chains" value="B/D/F/H/J/L/N/P=844-865"/>
</dbReference>
<dbReference type="PDBsum" id="1CLD"/>
<dbReference type="PDBsum" id="3E1K"/>
<dbReference type="SMR" id="P08657"/>
<dbReference type="FunCoup" id="P08657">
    <property type="interactions" value="956"/>
</dbReference>
<dbReference type="STRING" id="284590.P08657"/>
<dbReference type="PaxDb" id="284590-P08657"/>
<dbReference type="KEGG" id="kla:KLLA0_D12672g"/>
<dbReference type="eggNOG" id="ENOG502QSMN">
    <property type="taxonomic scope" value="Eukaryota"/>
</dbReference>
<dbReference type="HOGENOM" id="CLU_008599_2_0_1"/>
<dbReference type="InParanoid" id="P08657"/>
<dbReference type="OMA" id="PEGTGYF"/>
<dbReference type="EvolutionaryTrace" id="P08657"/>
<dbReference type="Proteomes" id="UP000000598">
    <property type="component" value="Chromosome D"/>
</dbReference>
<dbReference type="GO" id="GO:0005634">
    <property type="term" value="C:nucleus"/>
    <property type="evidence" value="ECO:0007669"/>
    <property type="project" value="UniProtKB-SubCell"/>
</dbReference>
<dbReference type="GO" id="GO:0000981">
    <property type="term" value="F:DNA-binding transcription factor activity, RNA polymerase II-specific"/>
    <property type="evidence" value="ECO:0007669"/>
    <property type="project" value="InterPro"/>
</dbReference>
<dbReference type="GO" id="GO:0000978">
    <property type="term" value="F:RNA polymerase II cis-regulatory region sequence-specific DNA binding"/>
    <property type="evidence" value="ECO:0007669"/>
    <property type="project" value="TreeGrafter"/>
</dbReference>
<dbReference type="GO" id="GO:0008270">
    <property type="term" value="F:zinc ion binding"/>
    <property type="evidence" value="ECO:0007669"/>
    <property type="project" value="InterPro"/>
</dbReference>
<dbReference type="GO" id="GO:0006351">
    <property type="term" value="P:DNA-templated transcription"/>
    <property type="evidence" value="ECO:0007669"/>
    <property type="project" value="InterPro"/>
</dbReference>
<dbReference type="GO" id="GO:0006012">
    <property type="term" value="P:galactose metabolic process"/>
    <property type="evidence" value="ECO:0007669"/>
    <property type="project" value="UniProtKB-KW"/>
</dbReference>
<dbReference type="GO" id="GO:0000435">
    <property type="term" value="P:positive regulation of transcription from RNA polymerase II promoter by galactose"/>
    <property type="evidence" value="ECO:0007669"/>
    <property type="project" value="TreeGrafter"/>
</dbReference>
<dbReference type="CDD" id="cd12148">
    <property type="entry name" value="fungal_TF_MHR"/>
    <property type="match status" value="1"/>
</dbReference>
<dbReference type="CDD" id="cd00067">
    <property type="entry name" value="GAL4"/>
    <property type="match status" value="1"/>
</dbReference>
<dbReference type="CDD" id="cd14654">
    <property type="entry name" value="ZIP_Gal4"/>
    <property type="match status" value="1"/>
</dbReference>
<dbReference type="FunFam" id="4.10.240.10:FF:000009">
    <property type="entry name" value="C6 transcription factor (Gal4)"/>
    <property type="match status" value="1"/>
</dbReference>
<dbReference type="Gene3D" id="1.20.5.170">
    <property type="match status" value="1"/>
</dbReference>
<dbReference type="Gene3D" id="4.10.240.10">
    <property type="entry name" value="Zn(2)-C6 fungal-type DNA-binding domain"/>
    <property type="match status" value="1"/>
</dbReference>
<dbReference type="InterPro" id="IPR046347">
    <property type="entry name" value="bZIP_sf"/>
</dbReference>
<dbReference type="InterPro" id="IPR051127">
    <property type="entry name" value="Fungal_SecMet_Regulators"/>
</dbReference>
<dbReference type="InterPro" id="IPR005600">
    <property type="entry name" value="Gal4_dimer_dom"/>
</dbReference>
<dbReference type="InterPro" id="IPR007219">
    <property type="entry name" value="Transcription_factor_dom_fun"/>
</dbReference>
<dbReference type="InterPro" id="IPR036864">
    <property type="entry name" value="Zn2-C6_fun-type_DNA-bd_sf"/>
</dbReference>
<dbReference type="InterPro" id="IPR001138">
    <property type="entry name" value="Zn2Cys6_DnaBD"/>
</dbReference>
<dbReference type="PANTHER" id="PTHR47424">
    <property type="entry name" value="REGULATORY PROTEIN GAL4"/>
    <property type="match status" value="1"/>
</dbReference>
<dbReference type="PANTHER" id="PTHR47424:SF3">
    <property type="entry name" value="REGULATORY PROTEIN GAL4"/>
    <property type="match status" value="1"/>
</dbReference>
<dbReference type="Pfam" id="PF04082">
    <property type="entry name" value="Fungal_trans"/>
    <property type="match status" value="1"/>
</dbReference>
<dbReference type="Pfam" id="PF03902">
    <property type="entry name" value="Gal4_dimer"/>
    <property type="match status" value="1"/>
</dbReference>
<dbReference type="Pfam" id="PF00172">
    <property type="entry name" value="Zn_clus"/>
    <property type="match status" value="1"/>
</dbReference>
<dbReference type="SMART" id="SM00906">
    <property type="entry name" value="Fungal_trans"/>
    <property type="match status" value="1"/>
</dbReference>
<dbReference type="SMART" id="SM00066">
    <property type="entry name" value="GAL4"/>
    <property type="match status" value="1"/>
</dbReference>
<dbReference type="SUPFAM" id="SSF57959">
    <property type="entry name" value="Leucine zipper domain"/>
    <property type="match status" value="1"/>
</dbReference>
<dbReference type="SUPFAM" id="SSF57701">
    <property type="entry name" value="Zn2/Cys6 DNA-binding domain"/>
    <property type="match status" value="1"/>
</dbReference>
<dbReference type="PROSITE" id="PS00463">
    <property type="entry name" value="ZN2_CY6_FUNGAL_1"/>
    <property type="match status" value="1"/>
</dbReference>
<dbReference type="PROSITE" id="PS50048">
    <property type="entry name" value="ZN2_CY6_FUNGAL_2"/>
    <property type="match status" value="1"/>
</dbReference>
<keyword id="KW-0002">3D-structure</keyword>
<keyword id="KW-0010">Activator</keyword>
<keyword id="KW-0119">Carbohydrate metabolism</keyword>
<keyword id="KW-0238">DNA-binding</keyword>
<keyword id="KW-0299">Galactose metabolism</keyword>
<keyword id="KW-0479">Metal-binding</keyword>
<keyword id="KW-0539">Nucleus</keyword>
<keyword id="KW-1185">Reference proteome</keyword>
<keyword id="KW-0804">Transcription</keyword>
<keyword id="KW-0805">Transcription regulation</keyword>
<keyword id="KW-0862">Zinc</keyword>
<proteinExistence type="evidence at protein level"/>